<reference key="1">
    <citation type="journal article" date="1999" name="Science">
        <title>Genome sequence of the radioresistant bacterium Deinococcus radiodurans R1.</title>
        <authorList>
            <person name="White O."/>
            <person name="Eisen J.A."/>
            <person name="Heidelberg J.F."/>
            <person name="Hickey E.K."/>
            <person name="Peterson J.D."/>
            <person name="Dodson R.J."/>
            <person name="Haft D.H."/>
            <person name="Gwinn M.L."/>
            <person name="Nelson W.C."/>
            <person name="Richardson D.L."/>
            <person name="Moffat K.S."/>
            <person name="Qin H."/>
            <person name="Jiang L."/>
            <person name="Pamphile W."/>
            <person name="Crosby M."/>
            <person name="Shen M."/>
            <person name="Vamathevan J.J."/>
            <person name="Lam P."/>
            <person name="McDonald L.A."/>
            <person name="Utterback T.R."/>
            <person name="Zalewski C."/>
            <person name="Makarova K.S."/>
            <person name="Aravind L."/>
            <person name="Daly M.J."/>
            <person name="Minton K.W."/>
            <person name="Fleischmann R.D."/>
            <person name="Ketchum K.A."/>
            <person name="Nelson K.E."/>
            <person name="Salzberg S.L."/>
            <person name="Smith H.O."/>
            <person name="Venter J.C."/>
            <person name="Fraser C.M."/>
        </authorList>
    </citation>
    <scope>NUCLEOTIDE SEQUENCE [LARGE SCALE GENOMIC DNA]</scope>
    <source>
        <strain>ATCC 13939 / DSM 20539 / JCM 16871 / CCUG 27074 / LMG 4051 / NBRC 15346 / NCIMB 9279 / VKM B-1422 / R1</strain>
    </source>
</reference>
<reference key="2">
    <citation type="journal article" date="2001" name="Cell">
        <title>High resolution structure of the large ribosomal subunit from a mesophilic eubacterium.</title>
        <authorList>
            <person name="Harms J."/>
            <person name="Schluenzen F."/>
            <person name="Zarivach R."/>
            <person name="Bashan A."/>
            <person name="Gat S."/>
            <person name="Agmon I."/>
            <person name="Bartels H."/>
            <person name="Franceschi F."/>
            <person name="Yonath A."/>
        </authorList>
    </citation>
    <scope>X-RAY CRYSTALLOGRAPHY (3.1 ANGSTROMS) OF THE 50S SUBUNIT</scope>
    <scope>PROTEIN SEQUENCE OF 1-6</scope>
    <source>
        <strain>ATCC 13939 / DSM 20539 / JCM 16871 / CCUG 27074 / LMG 4051 / NBRC 15346 / NCIMB 9279 / VKM B-1422 / R1</strain>
    </source>
</reference>
<reference key="3">
    <citation type="journal article" date="2001" name="Nature">
        <title>Structural basis for the interaction of antibiotics with the peptidyl transferase centre in eubacteria.</title>
        <authorList>
            <person name="Schluenzen F."/>
            <person name="Zarivach R."/>
            <person name="Harms J."/>
            <person name="Bashan A."/>
            <person name="Tocilj A."/>
            <person name="Albrecht R."/>
            <person name="Yonath A."/>
            <person name="Franceschi F."/>
        </authorList>
    </citation>
    <scope>X-RAY CRYSTALLOGRAPHY (3.1 ANGSTROMS) OF THE 50S SUBUNIT IN COMPLEX WITH FIVE ANTIBIOTICS</scope>
    <source>
        <strain>ATCC 13939 / DSM 20539 / JCM 16871 / CCUG 27074 / LMG 4051 / NBRC 15346 / NCIMB 9279 / VKM B-1422 / R1</strain>
    </source>
</reference>
<reference key="4">
    <citation type="journal article" date="2003" name="Mol. Cell">
        <title>Structural basis of the ribosomal machinery for peptide bond formation, translocation, and nascent chain progression.</title>
        <authorList>
            <person name="Bashan A."/>
            <person name="Agmon I."/>
            <person name="Zarivach R."/>
            <person name="Schluenzen F."/>
            <person name="Harms J."/>
            <person name="Berisio R."/>
            <person name="Bartels H."/>
            <person name="Franceschi F."/>
            <person name="Auerbach T."/>
            <person name="Hansen H.A."/>
            <person name="Kossoy E."/>
            <person name="Kessler M."/>
            <person name="Yonath A."/>
        </authorList>
    </citation>
    <scope>X-RAY CRYSTALLOGRAPHY (3.5 ANGSTROMS) OF THE 50S SUBUNIT IN COMPLEX WITH TRNA MIMICS</scope>
    <source>
        <strain>ATCC 13939 / DSM 20539 / JCM 16871 / CCUG 27074 / LMG 4051 / NBRC 15346 / NCIMB 9279 / VKM B-1422 / R1</strain>
    </source>
</reference>
<reference key="5">
    <citation type="journal article" date="2003" name="Structure">
        <title>Structural basis for the antibiotic activity of ketolides and azalides.</title>
        <authorList>
            <person name="Schluenzen F."/>
            <person name="Harms J.M."/>
            <person name="Franceschi F."/>
            <person name="Hansen H.A."/>
            <person name="Bartels H."/>
            <person name="Zarivach R."/>
            <person name="Yonath A."/>
        </authorList>
    </citation>
    <scope>X-RAY CRYSTALLOGRAPHY (3.3 ANGSTROMS) OF THE 50S SUBUNIT IN COMPLEX WITH MODIFIED MACROLIDE ANTIBIOTICS</scope>
    <source>
        <strain>ATCC 13939 / DSM 20539 / JCM 16871 / CCUG 27074 / LMG 4051 / NBRC 15346 / NCIMB 9279 / VKM B-1422 / R1</strain>
    </source>
</reference>
<reference key="6">
    <citation type="journal article" date="2003" name="Nat. Struct. Biol.">
        <title>Structural insight into the role of the ribosomal tunnel in cellular regulation.</title>
        <authorList>
            <person name="Berisio R."/>
            <person name="Schluenzen F."/>
            <person name="Harms J."/>
            <person name="Bashan A."/>
            <person name="Auerbach T."/>
            <person name="Baram D."/>
            <person name="Yonath A."/>
        </authorList>
    </citation>
    <scope>X-RAY CRYSTALLOGRAPHY (3.4 ANGSTROMS) OF THE 50S SUBUNIT IN COMPLEX WITH TROLEANDOMYCIN</scope>
    <source>
        <strain>ATCC 13939 / DSM 20539 / JCM 16871 / CCUG 27074 / LMG 4051 / NBRC 15346 / NCIMB 9279 / VKM B-1422 / R1</strain>
    </source>
</reference>
<reference key="7">
    <citation type="journal article" date="2004" name="BMC Biol.">
        <title>Alterations at the peptidyl transferase centre of the ribosome induced by the synergistic action of the streptogramins dalfopristin and quinupristin.</title>
        <authorList>
            <person name="Harms J.M."/>
            <person name="Schluenzen F."/>
            <person name="Fucini P."/>
            <person name="Bartels H."/>
            <person name="Yonath A."/>
        </authorList>
    </citation>
    <scope>X-RAY CRYSTALLOGRAPHY (3.4 ANGSTROMS) OF THE 50S SUBUNIT IN COMPLEX WITH THE STREPTOGRAMINS QUINUPRISTIN AND DALFOPRISTIN</scope>
    <source>
        <strain>ATCC 13939 / DSM 20539 / JCM 16871 / CCUG 27074 / LMG 4051 / NBRC 15346 / NCIMB 9279 / VKM B-1422 / R1</strain>
    </source>
</reference>
<reference key="8">
    <citation type="journal article" date="2004" name="Mol. Microbiol.">
        <title>Inhibition of peptide bond formation by pleuromutilins: the structure of the 50S ribosomal subunit from Deinococcus radiodurans in complex with tiamulin.</title>
        <authorList>
            <person name="Schluenzen F."/>
            <person name="Pyetan E."/>
            <person name="Fucini P."/>
            <person name="Yonath A."/>
            <person name="Harms J.M."/>
        </authorList>
    </citation>
    <scope>X-RAY CRYSTALLOGRAPHY (3.5 ANGSTROMS) OF THE 50S SUBUNIT IN COMPLEX WITH TIAMULIN</scope>
    <source>
        <strain>ATCC 13939 / DSM 20539 / JCM 16871 / CCUG 27074 / LMG 4051 / NBRC 15346 / NCIMB 9279 / VKM B-1422 / R1</strain>
    </source>
</reference>
<proteinExistence type="evidence at protein level"/>
<keyword id="KW-0002">3D-structure</keyword>
<keyword id="KW-0903">Direct protein sequencing</keyword>
<keyword id="KW-1185">Reference proteome</keyword>
<keyword id="KW-0687">Ribonucleoprotein</keyword>
<keyword id="KW-0689">Ribosomal protein</keyword>
<keyword id="KW-0694">RNA-binding</keyword>
<keyword id="KW-0699">rRNA-binding</keyword>
<sequence length="275" mass="30045">MAVKKYRPYTPSRRQMTTADFSGLTKKRPEKALTEALPKTGGRNNRGRITSRFIGGGHKRLYRIIDFKRRDKSGVNAKVAAIEYDPNRSARIALLHYADGEKRYILAPEGLTVGATVNAGPEAEPKLGNALPLRFVPVGAVVHALELVPGKGAQLARSAGTSVQVQGKESDYVIVRLPSGELRRVHSECYATIGAVGNAEHKNIVLGKAGRSRWLGRKPHQRGSAMNPVDHPHGGGEGRTGAGRVPVTPWGKPTKGLKTRRKRKTSDRFIVTRRK</sequence>
<evidence type="ECO:0000250" key="1"/>
<evidence type="ECO:0000256" key="2">
    <source>
        <dbReference type="SAM" id="MobiDB-lite"/>
    </source>
</evidence>
<evidence type="ECO:0000305" key="3"/>
<evidence type="ECO:0007829" key="4">
    <source>
        <dbReference type="PDB" id="2ZJR"/>
    </source>
</evidence>
<evidence type="ECO:0007829" key="5">
    <source>
        <dbReference type="PDB" id="3CF5"/>
    </source>
</evidence>
<evidence type="ECO:0007829" key="6">
    <source>
        <dbReference type="PDB" id="3DLL"/>
    </source>
</evidence>
<evidence type="ECO:0007829" key="7">
    <source>
        <dbReference type="PDB" id="3PIO"/>
    </source>
</evidence>
<evidence type="ECO:0007829" key="8">
    <source>
        <dbReference type="PDB" id="4IO9"/>
    </source>
</evidence>
<evidence type="ECO:0007829" key="9">
    <source>
        <dbReference type="PDB" id="5DM6"/>
    </source>
</evidence>
<evidence type="ECO:0007829" key="10">
    <source>
        <dbReference type="PDB" id="5DM7"/>
    </source>
</evidence>
<evidence type="ECO:0007829" key="11">
    <source>
        <dbReference type="PDB" id="5JVG"/>
    </source>
</evidence>
<evidence type="ECO:0007829" key="12">
    <source>
        <dbReference type="PDB" id="7A0S"/>
    </source>
</evidence>
<evidence type="ECO:0007829" key="13">
    <source>
        <dbReference type="PDB" id="7A18"/>
    </source>
</evidence>
<protein>
    <recommendedName>
        <fullName evidence="3">Large ribosomal subunit protein uL2</fullName>
    </recommendedName>
    <alternativeName>
        <fullName>50S ribosomal protein L2</fullName>
    </alternativeName>
</protein>
<organism>
    <name type="scientific">Deinococcus radiodurans (strain ATCC 13939 / DSM 20539 / JCM 16871 / CCUG 27074 / LMG 4051 / NBRC 15346 / NCIMB 9279 / VKM B-1422 / R1)</name>
    <dbReference type="NCBI Taxonomy" id="243230"/>
    <lineage>
        <taxon>Bacteria</taxon>
        <taxon>Thermotogati</taxon>
        <taxon>Deinococcota</taxon>
        <taxon>Deinococci</taxon>
        <taxon>Deinococcales</taxon>
        <taxon>Deinococcaceae</taxon>
        <taxon>Deinococcus</taxon>
    </lineage>
</organism>
<gene>
    <name type="primary">rplB</name>
    <name type="ordered locus">DR_0314</name>
</gene>
<dbReference type="EMBL" id="AE000513">
    <property type="protein sequence ID" value="AAF09895.1"/>
    <property type="molecule type" value="Genomic_DNA"/>
</dbReference>
<dbReference type="PIR" id="B75534">
    <property type="entry name" value="B75534"/>
</dbReference>
<dbReference type="RefSeq" id="NP_294037.1">
    <property type="nucleotide sequence ID" value="NC_001263.1"/>
</dbReference>
<dbReference type="RefSeq" id="WP_010886959.1">
    <property type="nucleotide sequence ID" value="NC_001263.1"/>
</dbReference>
<dbReference type="PDB" id="1NKW">
    <property type="method" value="X-ray"/>
    <property type="resolution" value="3.10 A"/>
    <property type="chains" value="A=1-275"/>
</dbReference>
<dbReference type="PDB" id="1NWX">
    <property type="method" value="X-ray"/>
    <property type="resolution" value="3.50 A"/>
    <property type="chains" value="A=2-275"/>
</dbReference>
<dbReference type="PDB" id="1NWY">
    <property type="method" value="X-ray"/>
    <property type="resolution" value="3.30 A"/>
    <property type="chains" value="A=2-275"/>
</dbReference>
<dbReference type="PDB" id="1SM1">
    <property type="method" value="X-ray"/>
    <property type="resolution" value="3.42 A"/>
    <property type="chains" value="A=1-275"/>
</dbReference>
<dbReference type="PDB" id="1XBP">
    <property type="method" value="X-ray"/>
    <property type="resolution" value="3.50 A"/>
    <property type="chains" value="A=2-275"/>
</dbReference>
<dbReference type="PDB" id="2ZJP">
    <property type="method" value="X-ray"/>
    <property type="resolution" value="3.70 A"/>
    <property type="chains" value="A=2-275"/>
</dbReference>
<dbReference type="PDB" id="2ZJQ">
    <property type="method" value="X-ray"/>
    <property type="resolution" value="3.30 A"/>
    <property type="chains" value="A=2-275"/>
</dbReference>
<dbReference type="PDB" id="2ZJR">
    <property type="method" value="X-ray"/>
    <property type="resolution" value="2.91 A"/>
    <property type="chains" value="A=2-275"/>
</dbReference>
<dbReference type="PDB" id="3CF5">
    <property type="method" value="X-ray"/>
    <property type="resolution" value="3.30 A"/>
    <property type="chains" value="A=2-275"/>
</dbReference>
<dbReference type="PDB" id="3DLL">
    <property type="method" value="X-ray"/>
    <property type="resolution" value="3.50 A"/>
    <property type="chains" value="A=2-275"/>
</dbReference>
<dbReference type="PDB" id="3PIO">
    <property type="method" value="X-ray"/>
    <property type="resolution" value="3.25 A"/>
    <property type="chains" value="A=2-275"/>
</dbReference>
<dbReference type="PDB" id="3PIP">
    <property type="method" value="X-ray"/>
    <property type="resolution" value="3.45 A"/>
    <property type="chains" value="A=2-274"/>
</dbReference>
<dbReference type="PDB" id="4IO9">
    <property type="method" value="X-ray"/>
    <property type="resolution" value="3.20 A"/>
    <property type="chains" value="A=2-275"/>
</dbReference>
<dbReference type="PDB" id="4IOA">
    <property type="method" value="X-ray"/>
    <property type="resolution" value="3.20 A"/>
    <property type="chains" value="A=2-275"/>
</dbReference>
<dbReference type="PDB" id="4IOC">
    <property type="method" value="X-ray"/>
    <property type="resolution" value="3.60 A"/>
    <property type="chains" value="A=2-275"/>
</dbReference>
<dbReference type="PDB" id="4U67">
    <property type="method" value="X-ray"/>
    <property type="resolution" value="3.65 A"/>
    <property type="chains" value="A=1-275"/>
</dbReference>
<dbReference type="PDB" id="4V49">
    <property type="method" value="X-ray"/>
    <property type="resolution" value="8.70 A"/>
    <property type="chains" value="A=4-273"/>
</dbReference>
<dbReference type="PDB" id="4V4A">
    <property type="method" value="X-ray"/>
    <property type="resolution" value="9.50 A"/>
    <property type="chains" value="A=4-273"/>
</dbReference>
<dbReference type="PDB" id="4V4G">
    <property type="method" value="X-ray"/>
    <property type="resolution" value="11.50 A"/>
    <property type="chains" value="D=4-273"/>
</dbReference>
<dbReference type="PDB" id="4WFN">
    <property type="method" value="X-ray"/>
    <property type="resolution" value="3.54 A"/>
    <property type="chains" value="A=1-275"/>
</dbReference>
<dbReference type="PDB" id="5DM6">
    <property type="method" value="X-ray"/>
    <property type="resolution" value="2.90 A"/>
    <property type="chains" value="A=2-275"/>
</dbReference>
<dbReference type="PDB" id="5DM7">
    <property type="method" value="X-ray"/>
    <property type="resolution" value="3.00 A"/>
    <property type="chains" value="A=2-275"/>
</dbReference>
<dbReference type="PDB" id="5JVG">
    <property type="method" value="X-ray"/>
    <property type="resolution" value="3.43 A"/>
    <property type="chains" value="A=1-275"/>
</dbReference>
<dbReference type="PDB" id="5JVH">
    <property type="method" value="X-ray"/>
    <property type="resolution" value="3.58 A"/>
    <property type="chains" value="A=1-275"/>
</dbReference>
<dbReference type="PDB" id="7A0R">
    <property type="method" value="X-ray"/>
    <property type="resolution" value="3.30 A"/>
    <property type="chains" value="A=2-272"/>
</dbReference>
<dbReference type="PDB" id="7A0S">
    <property type="method" value="X-ray"/>
    <property type="resolution" value="3.22 A"/>
    <property type="chains" value="A=2-275"/>
</dbReference>
<dbReference type="PDB" id="7A18">
    <property type="method" value="X-ray"/>
    <property type="resolution" value="3.40 A"/>
    <property type="chains" value="A=2-272"/>
</dbReference>
<dbReference type="PDBsum" id="1NKW"/>
<dbReference type="PDBsum" id="1NWX"/>
<dbReference type="PDBsum" id="1NWY"/>
<dbReference type="PDBsum" id="1SM1"/>
<dbReference type="PDBsum" id="1XBP"/>
<dbReference type="PDBsum" id="2ZJP"/>
<dbReference type="PDBsum" id="2ZJQ"/>
<dbReference type="PDBsum" id="2ZJR"/>
<dbReference type="PDBsum" id="3CF5"/>
<dbReference type="PDBsum" id="3DLL"/>
<dbReference type="PDBsum" id="3PIO"/>
<dbReference type="PDBsum" id="3PIP"/>
<dbReference type="PDBsum" id="4IO9"/>
<dbReference type="PDBsum" id="4IOA"/>
<dbReference type="PDBsum" id="4IOC"/>
<dbReference type="PDBsum" id="4U67"/>
<dbReference type="PDBsum" id="4V49"/>
<dbReference type="PDBsum" id="4V4A"/>
<dbReference type="PDBsum" id="4V4G"/>
<dbReference type="PDBsum" id="4WFN"/>
<dbReference type="PDBsum" id="5DM6"/>
<dbReference type="PDBsum" id="5DM7"/>
<dbReference type="PDBsum" id="5JVG"/>
<dbReference type="PDBsum" id="5JVH"/>
<dbReference type="PDBsum" id="7A0R"/>
<dbReference type="PDBsum" id="7A0S"/>
<dbReference type="PDBsum" id="7A18"/>
<dbReference type="SMR" id="Q9RXJ9"/>
<dbReference type="DIP" id="DIP-58602N"/>
<dbReference type="FunCoup" id="Q9RXJ9">
    <property type="interactions" value="456"/>
</dbReference>
<dbReference type="IntAct" id="Q9RXJ9">
    <property type="interactions" value="2"/>
</dbReference>
<dbReference type="STRING" id="243230.DR_0314"/>
<dbReference type="PaxDb" id="243230-DR_0314"/>
<dbReference type="EnsemblBacteria" id="AAF09895">
    <property type="protein sequence ID" value="AAF09895"/>
    <property type="gene ID" value="DR_0314"/>
</dbReference>
<dbReference type="GeneID" id="69516546"/>
<dbReference type="KEGG" id="dra:DR_0314"/>
<dbReference type="PATRIC" id="fig|243230.17.peg.480"/>
<dbReference type="eggNOG" id="COG0090">
    <property type="taxonomic scope" value="Bacteria"/>
</dbReference>
<dbReference type="HOGENOM" id="CLU_036235_2_1_0"/>
<dbReference type="InParanoid" id="Q9RXJ9"/>
<dbReference type="OrthoDB" id="9778722at2"/>
<dbReference type="EvolutionaryTrace" id="Q9RXJ9"/>
<dbReference type="Proteomes" id="UP000002524">
    <property type="component" value="Chromosome 1"/>
</dbReference>
<dbReference type="GO" id="GO:0015934">
    <property type="term" value="C:large ribosomal subunit"/>
    <property type="evidence" value="ECO:0007669"/>
    <property type="project" value="InterPro"/>
</dbReference>
<dbReference type="GO" id="GO:0003723">
    <property type="term" value="F:RNA binding"/>
    <property type="evidence" value="ECO:0000318"/>
    <property type="project" value="GO_Central"/>
</dbReference>
<dbReference type="GO" id="GO:0019843">
    <property type="term" value="F:rRNA binding"/>
    <property type="evidence" value="ECO:0007669"/>
    <property type="project" value="UniProtKB-UniRule"/>
</dbReference>
<dbReference type="GO" id="GO:0003735">
    <property type="term" value="F:structural constituent of ribosome"/>
    <property type="evidence" value="ECO:0000318"/>
    <property type="project" value="GO_Central"/>
</dbReference>
<dbReference type="GO" id="GO:0016740">
    <property type="term" value="F:transferase activity"/>
    <property type="evidence" value="ECO:0007669"/>
    <property type="project" value="InterPro"/>
</dbReference>
<dbReference type="GO" id="GO:0002181">
    <property type="term" value="P:cytoplasmic translation"/>
    <property type="evidence" value="ECO:0000318"/>
    <property type="project" value="GO_Central"/>
</dbReference>
<dbReference type="FunFam" id="2.30.30.30:FF:000001">
    <property type="entry name" value="50S ribosomal protein L2"/>
    <property type="match status" value="1"/>
</dbReference>
<dbReference type="FunFam" id="2.40.50.140:FF:000003">
    <property type="entry name" value="50S ribosomal protein L2"/>
    <property type="match status" value="1"/>
</dbReference>
<dbReference type="FunFam" id="4.10.950.10:FF:000001">
    <property type="entry name" value="50S ribosomal protein L2"/>
    <property type="match status" value="1"/>
</dbReference>
<dbReference type="Gene3D" id="2.30.30.30">
    <property type="match status" value="1"/>
</dbReference>
<dbReference type="Gene3D" id="2.40.50.140">
    <property type="entry name" value="Nucleic acid-binding proteins"/>
    <property type="match status" value="1"/>
</dbReference>
<dbReference type="Gene3D" id="4.10.950.10">
    <property type="entry name" value="Ribosomal protein L2, domain 3"/>
    <property type="match status" value="1"/>
</dbReference>
<dbReference type="HAMAP" id="MF_01320_B">
    <property type="entry name" value="Ribosomal_uL2_B"/>
    <property type="match status" value="1"/>
</dbReference>
<dbReference type="InterPro" id="IPR012340">
    <property type="entry name" value="NA-bd_OB-fold"/>
</dbReference>
<dbReference type="InterPro" id="IPR014722">
    <property type="entry name" value="Rib_uL2_dom2"/>
</dbReference>
<dbReference type="InterPro" id="IPR002171">
    <property type="entry name" value="Ribosomal_uL2"/>
</dbReference>
<dbReference type="InterPro" id="IPR005880">
    <property type="entry name" value="Ribosomal_uL2_bac/org-type"/>
</dbReference>
<dbReference type="InterPro" id="IPR022669">
    <property type="entry name" value="Ribosomal_uL2_C"/>
</dbReference>
<dbReference type="InterPro" id="IPR022671">
    <property type="entry name" value="Ribosomal_uL2_CS"/>
</dbReference>
<dbReference type="InterPro" id="IPR014726">
    <property type="entry name" value="Ribosomal_uL2_dom3"/>
</dbReference>
<dbReference type="InterPro" id="IPR022666">
    <property type="entry name" value="Ribosomal_uL2_RNA-bd_dom"/>
</dbReference>
<dbReference type="InterPro" id="IPR008991">
    <property type="entry name" value="Translation_prot_SH3-like_sf"/>
</dbReference>
<dbReference type="NCBIfam" id="TIGR01171">
    <property type="entry name" value="rplB_bact"/>
    <property type="match status" value="1"/>
</dbReference>
<dbReference type="PANTHER" id="PTHR13691:SF5">
    <property type="entry name" value="LARGE RIBOSOMAL SUBUNIT PROTEIN UL2M"/>
    <property type="match status" value="1"/>
</dbReference>
<dbReference type="PANTHER" id="PTHR13691">
    <property type="entry name" value="RIBOSOMAL PROTEIN L2"/>
    <property type="match status" value="1"/>
</dbReference>
<dbReference type="Pfam" id="PF00181">
    <property type="entry name" value="Ribosomal_L2"/>
    <property type="match status" value="1"/>
</dbReference>
<dbReference type="Pfam" id="PF03947">
    <property type="entry name" value="Ribosomal_L2_C"/>
    <property type="match status" value="1"/>
</dbReference>
<dbReference type="PIRSF" id="PIRSF002158">
    <property type="entry name" value="Ribosomal_L2"/>
    <property type="match status" value="1"/>
</dbReference>
<dbReference type="SMART" id="SM01383">
    <property type="entry name" value="Ribosomal_L2"/>
    <property type="match status" value="1"/>
</dbReference>
<dbReference type="SMART" id="SM01382">
    <property type="entry name" value="Ribosomal_L2_C"/>
    <property type="match status" value="1"/>
</dbReference>
<dbReference type="SUPFAM" id="SSF50249">
    <property type="entry name" value="Nucleic acid-binding proteins"/>
    <property type="match status" value="1"/>
</dbReference>
<dbReference type="SUPFAM" id="SSF50104">
    <property type="entry name" value="Translation proteins SH3-like domain"/>
    <property type="match status" value="1"/>
</dbReference>
<dbReference type="PROSITE" id="PS00467">
    <property type="entry name" value="RIBOSOMAL_L2"/>
    <property type="match status" value="1"/>
</dbReference>
<comment type="function">
    <text evidence="1">One of the primary rRNA binding proteins. Required for association of the 30S and 50S subunits to form the 70S ribosome, for tRNA binding and peptide bond formation. It has been suggested to have peptidyltransferase activity; this is somewhat controversial. Makes several contacts with the 16S rRNA in the 70S ribosome (By similarity).</text>
</comment>
<comment type="subunit">
    <text evidence="1">Part of the 50S ribosomal subunit. Forms a bridge to the 30S subunit in the 70S ribosome (By similarity).</text>
</comment>
<comment type="similarity">
    <text evidence="3">Belongs to the universal ribosomal protein uL2 family.</text>
</comment>
<accession>Q9RXJ9</accession>
<feature type="initiator methionine" description="Removed">
    <location>
        <position position="1"/>
    </location>
</feature>
<feature type="chain" id="PRO_0000129558" description="Large ribosomal subunit protein uL2">
    <location>
        <begin position="2"/>
        <end position="275"/>
    </location>
</feature>
<feature type="region of interest" description="Disordered" evidence="2">
    <location>
        <begin position="1"/>
        <end position="20"/>
    </location>
</feature>
<feature type="region of interest" description="Disordered" evidence="2">
    <location>
        <begin position="214"/>
        <end position="275"/>
    </location>
</feature>
<feature type="compositionally biased region" description="Basic residues" evidence="2">
    <location>
        <begin position="255"/>
        <end position="275"/>
    </location>
</feature>
<feature type="strand" evidence="12">
    <location>
        <begin position="3"/>
        <end position="5"/>
    </location>
</feature>
<feature type="strand" evidence="9">
    <location>
        <begin position="8"/>
        <end position="10"/>
    </location>
</feature>
<feature type="helix" evidence="9">
    <location>
        <begin position="11"/>
        <end position="13"/>
    </location>
</feature>
<feature type="strand" evidence="12">
    <location>
        <begin position="17"/>
        <end position="19"/>
    </location>
</feature>
<feature type="strand" evidence="11">
    <location>
        <begin position="22"/>
        <end position="24"/>
    </location>
</feature>
<feature type="turn" evidence="9">
    <location>
        <begin position="31"/>
        <end position="33"/>
    </location>
</feature>
<feature type="strand" evidence="9">
    <location>
        <begin position="34"/>
        <end position="37"/>
    </location>
</feature>
<feature type="strand" evidence="9">
    <location>
        <begin position="41"/>
        <end position="43"/>
    </location>
</feature>
<feature type="strand" evidence="4">
    <location>
        <begin position="46"/>
        <end position="49"/>
    </location>
</feature>
<feature type="strand" evidence="8">
    <location>
        <begin position="51"/>
        <end position="53"/>
    </location>
</feature>
<feature type="strand" evidence="9">
    <location>
        <begin position="60"/>
        <end position="63"/>
    </location>
</feature>
<feature type="strand" evidence="5">
    <location>
        <begin position="65"/>
        <end position="68"/>
    </location>
</feature>
<feature type="helix" evidence="9">
    <location>
        <begin position="69"/>
        <end position="72"/>
    </location>
</feature>
<feature type="strand" evidence="9">
    <location>
        <begin position="74"/>
        <end position="83"/>
    </location>
</feature>
<feature type="turn" evidence="4">
    <location>
        <begin position="86"/>
        <end position="88"/>
    </location>
</feature>
<feature type="strand" evidence="9">
    <location>
        <begin position="92"/>
        <end position="97"/>
    </location>
</feature>
<feature type="turn" evidence="6">
    <location>
        <begin position="98"/>
        <end position="100"/>
    </location>
</feature>
<feature type="strand" evidence="9">
    <location>
        <begin position="102"/>
        <end position="106"/>
    </location>
</feature>
<feature type="strand" evidence="13">
    <location>
        <begin position="108"/>
        <end position="110"/>
    </location>
</feature>
<feature type="strand" evidence="9">
    <location>
        <begin position="116"/>
        <end position="122"/>
    </location>
</feature>
<feature type="strand" evidence="9">
    <location>
        <begin position="130"/>
        <end position="133"/>
    </location>
</feature>
<feature type="strand" evidence="9">
    <location>
        <begin position="141"/>
        <end position="143"/>
    </location>
</feature>
<feature type="turn" evidence="9">
    <location>
        <begin position="149"/>
        <end position="151"/>
    </location>
</feature>
<feature type="strand" evidence="13">
    <location>
        <begin position="153"/>
        <end position="156"/>
    </location>
</feature>
<feature type="strand" evidence="4">
    <location>
        <begin position="158"/>
        <end position="161"/>
    </location>
</feature>
<feature type="strand" evidence="10">
    <location>
        <begin position="163"/>
        <end position="167"/>
    </location>
</feature>
<feature type="strand" evidence="9">
    <location>
        <begin position="170"/>
        <end position="176"/>
    </location>
</feature>
<feature type="turn" evidence="4">
    <location>
        <begin position="178"/>
        <end position="180"/>
    </location>
</feature>
<feature type="strand" evidence="9">
    <location>
        <begin position="182"/>
        <end position="186"/>
    </location>
</feature>
<feature type="strand" evidence="9">
    <location>
        <begin position="189"/>
        <end position="194"/>
    </location>
</feature>
<feature type="strand" evidence="8">
    <location>
        <begin position="196"/>
        <end position="198"/>
    </location>
</feature>
<feature type="helix" evidence="9">
    <location>
        <begin position="200"/>
        <end position="203"/>
    </location>
</feature>
<feature type="helix" evidence="9">
    <location>
        <begin position="209"/>
        <end position="214"/>
    </location>
</feature>
<feature type="strand" evidence="4">
    <location>
        <begin position="216"/>
        <end position="218"/>
    </location>
</feature>
<feature type="helix" evidence="9">
    <location>
        <begin position="223"/>
        <end position="225"/>
    </location>
</feature>
<feature type="helix" evidence="9">
    <location>
        <begin position="228"/>
        <end position="230"/>
    </location>
</feature>
<feature type="strand" evidence="9">
    <location>
        <begin position="236"/>
        <end position="239"/>
    </location>
</feature>
<feature type="strand" evidence="9">
    <location>
        <begin position="243"/>
        <end position="245"/>
    </location>
</feature>
<feature type="strand" evidence="4">
    <location>
        <begin position="247"/>
        <end position="250"/>
    </location>
</feature>
<feature type="strand" evidence="7">
    <location>
        <begin position="252"/>
        <end position="254"/>
    </location>
</feature>
<feature type="helix" evidence="8">
    <location>
        <begin position="262"/>
        <end position="264"/>
    </location>
</feature>
<feature type="helix" evidence="9">
    <location>
        <begin position="265"/>
        <end position="269"/>
    </location>
</feature>
<feature type="strand" evidence="9">
    <location>
        <begin position="270"/>
        <end position="272"/>
    </location>
</feature>
<name>RL2_DEIRA</name>